<feature type="signal peptide" evidence="1">
    <location>
        <begin position="1"/>
        <end position="20"/>
    </location>
</feature>
<feature type="chain" id="PRO_0000033595" description="T cell receptor alpha variable 8-4">
    <location>
        <begin position="21"/>
        <end position="113"/>
    </location>
</feature>
<feature type="domain" description="Ig-like" evidence="2">
    <location>
        <begin position="21"/>
        <end position="113" status="greater than"/>
    </location>
</feature>
<feature type="glycosylation site" description="N-linked (GlcNAc...) asparagine" evidence="1">
    <location>
        <position position="43"/>
    </location>
</feature>
<feature type="disulfide bond" evidence="2">
    <location>
        <begin position="42"/>
        <end position="110"/>
    </location>
</feature>
<feature type="non-terminal residue">
    <location>
        <position position="113"/>
    </location>
</feature>
<sequence length="113" mass="12377">MLLLLVPVLEVIFTLGGTRAQSVTQLGSHVSVSEGALVLLRCNYSSSVPPYLFWYVQYPNQGLQLLLKYTSAATLVKGINGFEAEFKKSETSFHLTKPSAHMSDAAEYFCAVS</sequence>
<gene>
    <name evidence="9" type="primary">TRAV8-4</name>
</gene>
<protein>
    <recommendedName>
        <fullName evidence="9">T cell receptor alpha variable 8-4</fullName>
    </recommendedName>
    <alternativeName>
        <fullName evidence="8">T cell receptor alpha chain V region PY14</fullName>
    </alternativeName>
</protein>
<name>TVA84_HUMAN</name>
<comment type="function">
    <text evidence="3 5 6 7">V region of the variable domain of T cell receptor (TR) alpha chain that participates in the antigen recognition (PubMed:24600447). Alpha-beta T cell receptors are antigen specific receptors which are essential to the immune response and are present on the cell surface of T lymphocytes. Recognize peptide-major histocompatibility (MH) (pMH) complexes that are displayed by antigen presenting cells (APC), a prerequisite for efficient T cell adaptive immunity against pathogens (PubMed:25493333). Binding of alpha-beta TR to pMH complex initiates TR-CD3 clustering on the cell surface and intracellular activation of LCK that phosphorylates the ITAM motifs of CD3G, CD3D, CD3E and CD247 enabling the recruitment of ZAP70. In turn ZAP70 phosphorylates LAT, which recruits numerous signaling molecules to form the LAT signalosome. The LAT signalosome propagates signal branching to three major signaling pathways, the calcium, the mitogen-activated protein kinase (MAPK) kinase and the nuclear factor-kappa-B (NF-kB) pathways, leading to the mobilization of transcription factors that are critical for gene expression and essential for T cell growth and differentiation (PubMed:23524462). The T cell repertoire is generated in the thymus, by V-(D)-J rearrangement. This repertoire is then shaped by intrathymic selection events to generate a peripheral T cell pool of self-MH restricted, non-autoaggressive T cells. Post-thymic interaction of alpha-beta TR with the pMH complexes shapes TR structural and functional avidity (PubMed:15040585).</text>
</comment>
<comment type="subunit">
    <text evidence="4">Alpha-beta TR is a heterodimer composed of an alpha and beta chain; disulfide-linked. The alpha-beta TR is associated with the transmembrane signaling CD3 coreceptor proteins to form the TR-CD3 (TcR or TCR). The assembly of alpha-beta TR heterodimers with CD3 occurs in the endoplasmic reticulum where a single alpha-beta TR heterodimer associates with one CD3D-CD3E heterodimer, one CD3G-CD3E heterodimer and one CD247 homodimer forming a stable octameric structure. CD3D-CD3E and CD3G-CD3E heterodimers preferentially associate with TR alpha and TR beta chains, respectively. The association of the CD247 homodimer is the last step of TcR assembly in the endoplasmic reticulum and is required for transport to the cell surface.</text>
</comment>
<comment type="subcellular location">
    <subcellularLocation>
        <location evidence="4">Cell membrane</location>
    </subcellularLocation>
</comment>
<comment type="polymorphism">
    <text evidence="10">There are several alleles. The sequence shown is that of IMGT allele TRAV8-4*01.</text>
</comment>
<evidence type="ECO:0000255" key="1"/>
<evidence type="ECO:0000255" key="2">
    <source>
        <dbReference type="PROSITE-ProRule" id="PRU00114"/>
    </source>
</evidence>
<evidence type="ECO:0000303" key="3">
    <source>
    </source>
</evidence>
<evidence type="ECO:0000303" key="4">
    <source>
    </source>
</evidence>
<evidence type="ECO:0000303" key="5">
    <source>
    </source>
</evidence>
<evidence type="ECO:0000303" key="6">
    <source>
    </source>
</evidence>
<evidence type="ECO:0000303" key="7">
    <source>
    </source>
</evidence>
<evidence type="ECO:0000303" key="8">
    <source>
    </source>
</evidence>
<evidence type="ECO:0000303" key="9">
    <source ref="3"/>
</evidence>
<evidence type="ECO:0000305" key="10"/>
<keyword id="KW-1064">Adaptive immunity</keyword>
<keyword id="KW-1003">Cell membrane</keyword>
<keyword id="KW-1015">Disulfide bond</keyword>
<keyword id="KW-0325">Glycoprotein</keyword>
<keyword id="KW-0391">Immunity</keyword>
<keyword id="KW-0393">Immunoglobulin domain</keyword>
<keyword id="KW-0472">Membrane</keyword>
<keyword id="KW-0675">Receptor</keyword>
<keyword id="KW-1185">Reference proteome</keyword>
<keyword id="KW-0732">Signal</keyword>
<keyword id="KW-1279">T cell receptor</keyword>
<proteinExistence type="evidence at transcript level"/>
<organism>
    <name type="scientific">Homo sapiens</name>
    <name type="common">Human</name>
    <dbReference type="NCBI Taxonomy" id="9606"/>
    <lineage>
        <taxon>Eukaryota</taxon>
        <taxon>Metazoa</taxon>
        <taxon>Chordata</taxon>
        <taxon>Craniata</taxon>
        <taxon>Vertebrata</taxon>
        <taxon>Euteleostomi</taxon>
        <taxon>Mammalia</taxon>
        <taxon>Eutheria</taxon>
        <taxon>Euarchontoglires</taxon>
        <taxon>Primates</taxon>
        <taxon>Haplorrhini</taxon>
        <taxon>Catarrhini</taxon>
        <taxon>Hominidae</taxon>
        <taxon>Homo</taxon>
    </lineage>
</organism>
<reference key="1">
    <citation type="journal article" date="1985" name="Proc. Natl. Acad. Sci. U.S.A.">
        <title>Analysis of cDNA clones specific for human T cells and the alpha and beta chains of the T-cell receptor heterodimer from a human T-cell line.</title>
        <authorList>
            <person name="Yanagi Y."/>
            <person name="Chan A."/>
            <person name="Chin B."/>
            <person name="Minden M."/>
            <person name="Mak T.W."/>
        </authorList>
    </citation>
    <scope>NUCLEOTIDE SEQUENCE [MRNA] (IMGT ALLELE TRAV8-4*01)</scope>
</reference>
<reference key="2">
    <citation type="journal article" date="2003" name="Nature">
        <title>The DNA sequence and analysis of human chromosome 14.</title>
        <authorList>
            <person name="Heilig R."/>
            <person name="Eckenberg R."/>
            <person name="Petit J.-L."/>
            <person name="Fonknechten N."/>
            <person name="Da Silva C."/>
            <person name="Cattolico L."/>
            <person name="Levy M."/>
            <person name="Barbe V."/>
            <person name="De Berardinis V."/>
            <person name="Ureta-Vidal A."/>
            <person name="Pelletier E."/>
            <person name="Vico V."/>
            <person name="Anthouard V."/>
            <person name="Rowen L."/>
            <person name="Madan A."/>
            <person name="Qin S."/>
            <person name="Sun H."/>
            <person name="Du H."/>
            <person name="Pepin K."/>
            <person name="Artiguenave F."/>
            <person name="Robert C."/>
            <person name="Cruaud C."/>
            <person name="Bruels T."/>
            <person name="Jaillon O."/>
            <person name="Friedlander L."/>
            <person name="Samson G."/>
            <person name="Brottier P."/>
            <person name="Cure S."/>
            <person name="Segurens B."/>
            <person name="Aniere F."/>
            <person name="Samain S."/>
            <person name="Crespeau H."/>
            <person name="Abbasi N."/>
            <person name="Aiach N."/>
            <person name="Boscus D."/>
            <person name="Dickhoff R."/>
            <person name="Dors M."/>
            <person name="Dubois I."/>
            <person name="Friedman C."/>
            <person name="Gouyvenoux M."/>
            <person name="James R."/>
            <person name="Madan A."/>
            <person name="Mairey-Estrada B."/>
            <person name="Mangenot S."/>
            <person name="Martins N."/>
            <person name="Menard M."/>
            <person name="Oztas S."/>
            <person name="Ratcliffe A."/>
            <person name="Shaffer T."/>
            <person name="Trask B."/>
            <person name="Vacherie B."/>
            <person name="Bellemere C."/>
            <person name="Belser C."/>
            <person name="Besnard-Gonnet M."/>
            <person name="Bartol-Mavel D."/>
            <person name="Boutard M."/>
            <person name="Briez-Silla S."/>
            <person name="Combette S."/>
            <person name="Dufosse-Laurent V."/>
            <person name="Ferron C."/>
            <person name="Lechaplais C."/>
            <person name="Louesse C."/>
            <person name="Muselet D."/>
            <person name="Magdelenat G."/>
            <person name="Pateau E."/>
            <person name="Petit E."/>
            <person name="Sirvain-Trukniewicz P."/>
            <person name="Trybou A."/>
            <person name="Vega-Czarny N."/>
            <person name="Bataille E."/>
            <person name="Bluet E."/>
            <person name="Bordelais I."/>
            <person name="Dubois M."/>
            <person name="Dumont C."/>
            <person name="Guerin T."/>
            <person name="Haffray S."/>
            <person name="Hammadi R."/>
            <person name="Muanga J."/>
            <person name="Pellouin V."/>
            <person name="Robert D."/>
            <person name="Wunderle E."/>
            <person name="Gauguet G."/>
            <person name="Roy A."/>
            <person name="Sainte-Marthe L."/>
            <person name="Verdier J."/>
            <person name="Verdier-Discala C."/>
            <person name="Hillier L.W."/>
            <person name="Fulton L."/>
            <person name="McPherson J."/>
            <person name="Matsuda F."/>
            <person name="Wilson R."/>
            <person name="Scarpelli C."/>
            <person name="Gyapay G."/>
            <person name="Wincker P."/>
            <person name="Saurin W."/>
            <person name="Quetier F."/>
            <person name="Waterston R."/>
            <person name="Hood L."/>
            <person name="Weissenbach J."/>
        </authorList>
    </citation>
    <scope>NUCLEOTIDE SEQUENCE [LARGE SCALE GENOMIC DNA] (IMGT ALLELE TRAV8-4*01)</scope>
</reference>
<reference key="3">
    <citation type="book" date="2001" name="The T Cell Receptor FactsBook.">
        <title>The T Cell Receptor FactsBook.</title>
        <editorList>
            <person name="Lefranc M.P."/>
            <person name="Lefranc G."/>
        </editorList>
        <authorList>
            <person name="Lefranc M.P."/>
            <person name="Lefranc G."/>
        </authorList>
    </citation>
    <scope>NOMENCLATURE</scope>
</reference>
<reference key="4">
    <citation type="journal article" date="2004" name="Nat. Rev. Immunol.">
        <title>The many important facets of T-cell repertoire diversity.</title>
        <authorList>
            <person name="Nikolich-Zugich J."/>
            <person name="Slifka M.K."/>
            <person name="Messaoudi I."/>
        </authorList>
    </citation>
    <scope>REVIEW ON T CELL REPERTOIRE DIVERSITY</scope>
</reference>
<reference key="5">
    <citation type="journal article" date="2010" name="Cold Spring Harb. Perspect. Biol.">
        <title>Structural biology of the T-cell receptor: insights into receptor assembly, ligand recognition, and initiation of signaling.</title>
        <authorList>
            <person name="Wucherpfennig K.W."/>
            <person name="Gagnon E."/>
            <person name="Call M.J."/>
            <person name="Huseby E.S."/>
            <person name="Call M.E."/>
        </authorList>
    </citation>
    <scope>REVIEW ON T CELL RECEPTOR-CD3 COMPLEX ASSEMBLY</scope>
    <scope>SUBCELLULAR LOCATION</scope>
</reference>
<reference key="6">
    <citation type="journal article" date="2013" name="Nat. Rev. Immunol.">
        <title>T cell receptor signalling networks: branched, diversified and bounded.</title>
        <authorList>
            <person name="Brownlie R.J."/>
            <person name="Zamoyska R."/>
        </authorList>
    </citation>
    <scope>REVIEW ON T CELL RECEPTOR SIGNALING</scope>
</reference>
<reference key="7">
    <citation type="journal article" date="2014" name="Front. Immunol.">
        <title>Immunoglobulin and T Cell Receptor Genes: IMGT((R)) and the Birth and Rise of Immunoinformatics.</title>
        <authorList>
            <person name="Lefranc M.P."/>
        </authorList>
    </citation>
    <scope>NOMENCLATURE</scope>
</reference>
<reference key="8">
    <citation type="journal article" date="2015" name="Annu. Rev. Immunol.">
        <title>T cell antigen receptor recognition of antigen-presenting molecules.</title>
        <authorList>
            <person name="Rossjohn J."/>
            <person name="Gras S."/>
            <person name="Miles J.J."/>
            <person name="Turner S.J."/>
            <person name="Godfrey D.I."/>
            <person name="McCluskey J."/>
        </authorList>
    </citation>
    <scope>REVIEW ON FUNCTION</scope>
</reference>
<dbReference type="EMBL" id="AC243980">
    <property type="status" value="NOT_ANNOTATED_CDS"/>
    <property type="molecule type" value="Genomic_DNA"/>
</dbReference>
<dbReference type="PIR" id="A02011">
    <property type="entry name" value="RWHUAV"/>
</dbReference>
<dbReference type="SMR" id="P01737"/>
<dbReference type="FunCoup" id="P01737">
    <property type="interactions" value="425"/>
</dbReference>
<dbReference type="IMGT_GENE-DB" id="TRAV8-4"/>
<dbReference type="GlyCosmos" id="P01737">
    <property type="glycosylation" value="1 site, No reported glycans"/>
</dbReference>
<dbReference type="GlyGen" id="P01737">
    <property type="glycosylation" value="1 site"/>
</dbReference>
<dbReference type="iPTMnet" id="P01737"/>
<dbReference type="PhosphoSitePlus" id="P01737"/>
<dbReference type="BioMuta" id="-"/>
<dbReference type="BioMuta" id="TRAV8-4"/>
<dbReference type="DMDM" id="136490"/>
<dbReference type="MassIVE" id="P01737"/>
<dbReference type="Ensembl" id="ENST00000390438.2">
    <property type="protein sequence ID" value="ENSP00000445942.1"/>
    <property type="gene ID" value="ENSG00000211790.2"/>
</dbReference>
<dbReference type="AGR" id="HGNC:12149"/>
<dbReference type="GeneCards" id="TRAV8-4"/>
<dbReference type="HGNC" id="HGNC:12149">
    <property type="gene designation" value="TRAV8-4"/>
</dbReference>
<dbReference type="HPA" id="ENSG00000211790">
    <property type="expression patterns" value="Tissue enriched (lymphoid)"/>
</dbReference>
<dbReference type="neXtProt" id="NX_P01737"/>
<dbReference type="VEuPathDB" id="HostDB:ENSG00000211790"/>
<dbReference type="GeneTree" id="ENSGT00940000153073"/>
<dbReference type="InParanoid" id="P01737"/>
<dbReference type="OMA" id="FMTQEPK"/>
<dbReference type="OrthoDB" id="8947657at2759"/>
<dbReference type="PAN-GO" id="P01737">
    <property type="GO annotations" value="0 GO annotations based on evolutionary models"/>
</dbReference>
<dbReference type="PhylomeDB" id="P01737"/>
<dbReference type="PathwayCommons" id="P01737"/>
<dbReference type="Reactome" id="R-HSA-198933">
    <property type="pathway name" value="Immunoregulatory interactions between a Lymphoid and a non-Lymphoid cell"/>
</dbReference>
<dbReference type="Reactome" id="R-HSA-202424">
    <property type="pathway name" value="Downstream TCR signaling"/>
</dbReference>
<dbReference type="Reactome" id="R-HSA-202427">
    <property type="pathway name" value="Phosphorylation of CD3 and TCR zeta chains"/>
</dbReference>
<dbReference type="Reactome" id="R-HSA-202430">
    <property type="pathway name" value="Translocation of ZAP-70 to Immunological synapse"/>
</dbReference>
<dbReference type="Reactome" id="R-HSA-202433">
    <property type="pathway name" value="Generation of second messenger molecules"/>
</dbReference>
<dbReference type="Reactome" id="R-HSA-389948">
    <property type="pathway name" value="Co-inhibition by PD-1"/>
</dbReference>
<dbReference type="ChiTaRS" id="TRAV8-4">
    <property type="organism name" value="human"/>
</dbReference>
<dbReference type="Pharos" id="P01737">
    <property type="development level" value="Tdark"/>
</dbReference>
<dbReference type="PRO" id="PR:P01737"/>
<dbReference type="Proteomes" id="UP000005640">
    <property type="component" value="Chromosome 14"/>
</dbReference>
<dbReference type="RNAct" id="P01737">
    <property type="molecule type" value="protein"/>
</dbReference>
<dbReference type="Bgee" id="ENSG00000211790">
    <property type="expression patterns" value="Expressed in male germ line stem cell (sensu Vertebrata) in testis and 62 other cell types or tissues"/>
</dbReference>
<dbReference type="GO" id="GO:0005886">
    <property type="term" value="C:plasma membrane"/>
    <property type="evidence" value="ECO:0000304"/>
    <property type="project" value="Reactome"/>
</dbReference>
<dbReference type="GO" id="GO:0042101">
    <property type="term" value="C:T cell receptor complex"/>
    <property type="evidence" value="ECO:0007669"/>
    <property type="project" value="UniProtKB-KW"/>
</dbReference>
<dbReference type="GO" id="GO:0042287">
    <property type="term" value="F:MHC protein binding"/>
    <property type="evidence" value="ECO:0000303"/>
    <property type="project" value="UniProtKB"/>
</dbReference>
<dbReference type="GO" id="GO:0042605">
    <property type="term" value="F:peptide antigen binding"/>
    <property type="evidence" value="ECO:0000303"/>
    <property type="project" value="UniProtKB"/>
</dbReference>
<dbReference type="GO" id="GO:0002250">
    <property type="term" value="P:adaptive immune response"/>
    <property type="evidence" value="ECO:0007669"/>
    <property type="project" value="UniProtKB-KW"/>
</dbReference>
<dbReference type="GO" id="GO:0006955">
    <property type="term" value="P:immune response"/>
    <property type="evidence" value="ECO:0000303"/>
    <property type="project" value="UniProtKB"/>
</dbReference>
<dbReference type="Gene3D" id="2.60.40.10">
    <property type="entry name" value="Immunoglobulins"/>
    <property type="match status" value="1"/>
</dbReference>
<dbReference type="InterPro" id="IPR007110">
    <property type="entry name" value="Ig-like_dom"/>
</dbReference>
<dbReference type="InterPro" id="IPR036179">
    <property type="entry name" value="Ig-like_dom_sf"/>
</dbReference>
<dbReference type="InterPro" id="IPR013783">
    <property type="entry name" value="Ig-like_fold"/>
</dbReference>
<dbReference type="InterPro" id="IPR013106">
    <property type="entry name" value="Ig_V-set"/>
</dbReference>
<dbReference type="InterPro" id="IPR051287">
    <property type="entry name" value="TCR_variable_region"/>
</dbReference>
<dbReference type="PANTHER" id="PTHR19367:SF24">
    <property type="entry name" value="T CELL RECEPTOR ALPHA VARIABLE 8-4"/>
    <property type="match status" value="1"/>
</dbReference>
<dbReference type="PANTHER" id="PTHR19367">
    <property type="entry name" value="T-CELL RECEPTOR ALPHA CHAIN V REGION"/>
    <property type="match status" value="1"/>
</dbReference>
<dbReference type="Pfam" id="PF07686">
    <property type="entry name" value="V-set"/>
    <property type="match status" value="1"/>
</dbReference>
<dbReference type="SUPFAM" id="SSF48726">
    <property type="entry name" value="Immunoglobulin"/>
    <property type="match status" value="1"/>
</dbReference>
<dbReference type="PROSITE" id="PS50835">
    <property type="entry name" value="IG_LIKE"/>
    <property type="match status" value="1"/>
</dbReference>
<accession>P01737</accession>
<accession>A0A0B4J246</accession>